<accession>C6DK13</accession>
<sequence length="247" mass="26556">MKNENLQQKHQTVSSPIVVALDYASQQAALSFVDRIDPQDCRLKVGKEMFTLFGPQFVQTLQQRGFDVFLDLKFHDIPNTVAHAVAAAADLGVWMVNVHASGGSRMMVAAKEALVPFGNDAPLLIAVTVLTSMDEDDLRGLGITVSPAEQAERLAVLTHNSGLDGVVCSAHEAQRLKQVCGQAFKLVTPGIRPAGSDVGDQRRIMTPVQAQQAGVDYMVIGRPITQSADPAQTLREIRVSLLNGASS</sequence>
<comment type="function">
    <text evidence="1">Catalyzes the decarboxylation of orotidine 5'-monophosphate (OMP) to uridine 5'-monophosphate (UMP).</text>
</comment>
<comment type="catalytic activity">
    <reaction evidence="1">
        <text>orotidine 5'-phosphate + H(+) = UMP + CO2</text>
        <dbReference type="Rhea" id="RHEA:11596"/>
        <dbReference type="ChEBI" id="CHEBI:15378"/>
        <dbReference type="ChEBI" id="CHEBI:16526"/>
        <dbReference type="ChEBI" id="CHEBI:57538"/>
        <dbReference type="ChEBI" id="CHEBI:57865"/>
        <dbReference type="EC" id="4.1.1.23"/>
    </reaction>
</comment>
<comment type="pathway">
    <text evidence="1">Pyrimidine metabolism; UMP biosynthesis via de novo pathway; UMP from orotate: step 2/2.</text>
</comment>
<comment type="subunit">
    <text evidence="1">Homodimer.</text>
</comment>
<comment type="similarity">
    <text evidence="1">Belongs to the OMP decarboxylase family. Type 1 subfamily.</text>
</comment>
<name>PYRF_PECCP</name>
<evidence type="ECO:0000255" key="1">
    <source>
        <dbReference type="HAMAP-Rule" id="MF_01200"/>
    </source>
</evidence>
<reference key="1">
    <citation type="submission" date="2009-07" db="EMBL/GenBank/DDBJ databases">
        <title>Complete sequence of Pectobacterium carotovorum subsp. carotovorum PC1.</title>
        <authorList>
            <consortium name="US DOE Joint Genome Institute"/>
            <person name="Lucas S."/>
            <person name="Copeland A."/>
            <person name="Lapidus A."/>
            <person name="Glavina del Rio T."/>
            <person name="Tice H."/>
            <person name="Bruce D."/>
            <person name="Goodwin L."/>
            <person name="Pitluck S."/>
            <person name="Munk A.C."/>
            <person name="Brettin T."/>
            <person name="Detter J.C."/>
            <person name="Han C."/>
            <person name="Tapia R."/>
            <person name="Larimer F."/>
            <person name="Land M."/>
            <person name="Hauser L."/>
            <person name="Kyrpides N."/>
            <person name="Mikhailova N."/>
            <person name="Balakrishnan V."/>
            <person name="Glasner J."/>
            <person name="Perna N.T."/>
        </authorList>
    </citation>
    <scope>NUCLEOTIDE SEQUENCE [LARGE SCALE GENOMIC DNA]</scope>
    <source>
        <strain>PC1</strain>
    </source>
</reference>
<keyword id="KW-0210">Decarboxylase</keyword>
<keyword id="KW-0456">Lyase</keyword>
<keyword id="KW-0665">Pyrimidine biosynthesis</keyword>
<feature type="chain" id="PRO_1000213824" description="Orotidine 5'-phosphate decarboxylase">
    <location>
        <begin position="1"/>
        <end position="247"/>
    </location>
</feature>
<feature type="active site" description="Proton donor" evidence="1">
    <location>
        <position position="73"/>
    </location>
</feature>
<feature type="binding site" evidence="1">
    <location>
        <position position="22"/>
    </location>
    <ligand>
        <name>substrate</name>
    </ligand>
</feature>
<feature type="binding site" evidence="1">
    <location>
        <position position="44"/>
    </location>
    <ligand>
        <name>substrate</name>
    </ligand>
</feature>
<feature type="binding site" evidence="1">
    <location>
        <begin position="71"/>
        <end position="80"/>
    </location>
    <ligand>
        <name>substrate</name>
    </ligand>
</feature>
<feature type="binding site" evidence="1">
    <location>
        <position position="131"/>
    </location>
    <ligand>
        <name>substrate</name>
    </ligand>
</feature>
<feature type="binding site" evidence="1">
    <location>
        <position position="192"/>
    </location>
    <ligand>
        <name>substrate</name>
    </ligand>
</feature>
<feature type="binding site" evidence="1">
    <location>
        <position position="201"/>
    </location>
    <ligand>
        <name>substrate</name>
    </ligand>
</feature>
<feature type="binding site" evidence="1">
    <location>
        <position position="221"/>
    </location>
    <ligand>
        <name>substrate</name>
    </ligand>
</feature>
<feature type="binding site" evidence="1">
    <location>
        <position position="222"/>
    </location>
    <ligand>
        <name>substrate</name>
    </ligand>
</feature>
<protein>
    <recommendedName>
        <fullName evidence="1">Orotidine 5'-phosphate decarboxylase</fullName>
        <ecNumber evidence="1">4.1.1.23</ecNumber>
    </recommendedName>
    <alternativeName>
        <fullName evidence="1">OMP decarboxylase</fullName>
        <shortName evidence="1">OMPDCase</shortName>
        <shortName evidence="1">OMPdecase</shortName>
    </alternativeName>
</protein>
<gene>
    <name evidence="1" type="primary">pyrF</name>
    <name type="ordered locus">PC1_2365</name>
</gene>
<proteinExistence type="inferred from homology"/>
<dbReference type="EC" id="4.1.1.23" evidence="1"/>
<dbReference type="EMBL" id="CP001657">
    <property type="protein sequence ID" value="ACT13396.1"/>
    <property type="molecule type" value="Genomic_DNA"/>
</dbReference>
<dbReference type="RefSeq" id="WP_015840578.1">
    <property type="nucleotide sequence ID" value="NC_012917.1"/>
</dbReference>
<dbReference type="SMR" id="C6DK13"/>
<dbReference type="STRING" id="561230.PC1_2365"/>
<dbReference type="KEGG" id="pct:PC1_2365"/>
<dbReference type="eggNOG" id="COG0284">
    <property type="taxonomic scope" value="Bacteria"/>
</dbReference>
<dbReference type="HOGENOM" id="CLU_067069_0_0_6"/>
<dbReference type="OrthoDB" id="9806203at2"/>
<dbReference type="UniPathway" id="UPA00070">
    <property type="reaction ID" value="UER00120"/>
</dbReference>
<dbReference type="Proteomes" id="UP000002736">
    <property type="component" value="Chromosome"/>
</dbReference>
<dbReference type="GO" id="GO:0005829">
    <property type="term" value="C:cytosol"/>
    <property type="evidence" value="ECO:0007669"/>
    <property type="project" value="TreeGrafter"/>
</dbReference>
<dbReference type="GO" id="GO:0004590">
    <property type="term" value="F:orotidine-5'-phosphate decarboxylase activity"/>
    <property type="evidence" value="ECO:0007669"/>
    <property type="project" value="UniProtKB-UniRule"/>
</dbReference>
<dbReference type="GO" id="GO:0006207">
    <property type="term" value="P:'de novo' pyrimidine nucleobase biosynthetic process"/>
    <property type="evidence" value="ECO:0007669"/>
    <property type="project" value="InterPro"/>
</dbReference>
<dbReference type="GO" id="GO:0044205">
    <property type="term" value="P:'de novo' UMP biosynthetic process"/>
    <property type="evidence" value="ECO:0007669"/>
    <property type="project" value="UniProtKB-UniRule"/>
</dbReference>
<dbReference type="CDD" id="cd04725">
    <property type="entry name" value="OMP_decarboxylase_like"/>
    <property type="match status" value="1"/>
</dbReference>
<dbReference type="FunFam" id="3.20.20.70:FF:000015">
    <property type="entry name" value="Orotidine 5'-phosphate decarboxylase"/>
    <property type="match status" value="1"/>
</dbReference>
<dbReference type="Gene3D" id="3.20.20.70">
    <property type="entry name" value="Aldolase class I"/>
    <property type="match status" value="1"/>
</dbReference>
<dbReference type="HAMAP" id="MF_01200_B">
    <property type="entry name" value="OMPdecase_type1_B"/>
    <property type="match status" value="1"/>
</dbReference>
<dbReference type="InterPro" id="IPR013785">
    <property type="entry name" value="Aldolase_TIM"/>
</dbReference>
<dbReference type="InterPro" id="IPR014732">
    <property type="entry name" value="OMPdecase"/>
</dbReference>
<dbReference type="InterPro" id="IPR018089">
    <property type="entry name" value="OMPdecase_AS"/>
</dbReference>
<dbReference type="InterPro" id="IPR047596">
    <property type="entry name" value="OMPdecase_bac"/>
</dbReference>
<dbReference type="InterPro" id="IPR001754">
    <property type="entry name" value="OMPdeCOase_dom"/>
</dbReference>
<dbReference type="InterPro" id="IPR011060">
    <property type="entry name" value="RibuloseP-bd_barrel"/>
</dbReference>
<dbReference type="NCBIfam" id="NF001273">
    <property type="entry name" value="PRK00230.1"/>
    <property type="match status" value="1"/>
</dbReference>
<dbReference type="NCBIfam" id="TIGR01740">
    <property type="entry name" value="pyrF"/>
    <property type="match status" value="1"/>
</dbReference>
<dbReference type="PANTHER" id="PTHR32119">
    <property type="entry name" value="OROTIDINE 5'-PHOSPHATE DECARBOXYLASE"/>
    <property type="match status" value="1"/>
</dbReference>
<dbReference type="PANTHER" id="PTHR32119:SF2">
    <property type="entry name" value="OROTIDINE 5'-PHOSPHATE DECARBOXYLASE"/>
    <property type="match status" value="1"/>
</dbReference>
<dbReference type="Pfam" id="PF00215">
    <property type="entry name" value="OMPdecase"/>
    <property type="match status" value="1"/>
</dbReference>
<dbReference type="SMART" id="SM00934">
    <property type="entry name" value="OMPdecase"/>
    <property type="match status" value="1"/>
</dbReference>
<dbReference type="SUPFAM" id="SSF51366">
    <property type="entry name" value="Ribulose-phoshate binding barrel"/>
    <property type="match status" value="1"/>
</dbReference>
<dbReference type="PROSITE" id="PS00156">
    <property type="entry name" value="OMPDECASE"/>
    <property type="match status" value="1"/>
</dbReference>
<organism>
    <name type="scientific">Pectobacterium carotovorum subsp. carotovorum (strain PC1)</name>
    <dbReference type="NCBI Taxonomy" id="561230"/>
    <lineage>
        <taxon>Bacteria</taxon>
        <taxon>Pseudomonadati</taxon>
        <taxon>Pseudomonadota</taxon>
        <taxon>Gammaproteobacteria</taxon>
        <taxon>Enterobacterales</taxon>
        <taxon>Pectobacteriaceae</taxon>
        <taxon>Pectobacterium</taxon>
    </lineage>
</organism>